<sequence>MTVTALGVPTVRGRSEGSAIASDAPGDGPLLDRFGRSATDLRVSLTDRCNLRCGYCMPAEGLNWLPGEQLLGPAELARLLRIAVTRLGITSVRFTGGEPLLARHLEEVVAAAAQLRPRPEISLTTNGVGLAKRAAALAEAGLDRVNVSLDTVDRAHFAAITRRDRLTDVLDGLAGARAAGLTPVKVNAVLDPETGRQDVVELLRFCLEQGYQLRVIEQMPLDAGHQWRRNALLGSDDVLAALQPHFRLRPDPAPRGSAPAELWLVDAGPDTPAGKFGVIASVSHAFCSTCDRTRLTADGQVRSCLFSTEETDLRGLLRAGAGDEAIEAAWRSAMWAKPAGHGINNPDFVQPQRPMSAIGG</sequence>
<proteinExistence type="inferred from homology"/>
<gene>
    <name evidence="1" type="primary">moaA</name>
    <name type="ordered locus">MMAR_4663</name>
</gene>
<protein>
    <recommendedName>
        <fullName evidence="1">GTP 3',8-cyclase</fullName>
        <ecNumber evidence="1">4.1.99.22</ecNumber>
    </recommendedName>
    <alternativeName>
        <fullName evidence="1">Molybdenum cofactor biosynthesis protein A</fullName>
    </alternativeName>
</protein>
<comment type="function">
    <text evidence="1">Catalyzes the cyclization of GTP to (8S)-3',8-cyclo-7,8-dihydroguanosine 5'-triphosphate.</text>
</comment>
<comment type="catalytic activity">
    <reaction evidence="1">
        <text>GTP + AH2 + S-adenosyl-L-methionine = (8S)-3',8-cyclo-7,8-dihydroguanosine 5'-triphosphate + 5'-deoxyadenosine + L-methionine + A + H(+)</text>
        <dbReference type="Rhea" id="RHEA:49576"/>
        <dbReference type="ChEBI" id="CHEBI:13193"/>
        <dbReference type="ChEBI" id="CHEBI:15378"/>
        <dbReference type="ChEBI" id="CHEBI:17319"/>
        <dbReference type="ChEBI" id="CHEBI:17499"/>
        <dbReference type="ChEBI" id="CHEBI:37565"/>
        <dbReference type="ChEBI" id="CHEBI:57844"/>
        <dbReference type="ChEBI" id="CHEBI:59789"/>
        <dbReference type="ChEBI" id="CHEBI:131766"/>
        <dbReference type="EC" id="4.1.99.22"/>
    </reaction>
</comment>
<comment type="cofactor">
    <cofactor evidence="1">
        <name>[4Fe-4S] cluster</name>
        <dbReference type="ChEBI" id="CHEBI:49883"/>
    </cofactor>
    <text evidence="1">Binds 2 [4Fe-4S] clusters. Binds 1 [4Fe-4S] cluster coordinated with 3 cysteines and an exchangeable S-adenosyl-L-methionine and 1 [4Fe-4S] cluster coordinated with 3 cysteines and the GTP-derived substrate.</text>
</comment>
<comment type="pathway">
    <text evidence="1">Cofactor biosynthesis; molybdopterin biosynthesis.</text>
</comment>
<comment type="subunit">
    <text evidence="1">Monomer and homodimer.</text>
</comment>
<comment type="similarity">
    <text evidence="1">Belongs to the radical SAM superfamily. MoaA family.</text>
</comment>
<accession>B2HFA4</accession>
<dbReference type="EC" id="4.1.99.22" evidence="1"/>
<dbReference type="EMBL" id="CP000854">
    <property type="protein sequence ID" value="ACC43066.1"/>
    <property type="molecule type" value="Genomic_DNA"/>
</dbReference>
<dbReference type="RefSeq" id="WP_012396203.1">
    <property type="nucleotide sequence ID" value="NC_010612.1"/>
</dbReference>
<dbReference type="SMR" id="B2HFA4"/>
<dbReference type="STRING" id="216594.MMAR_4663"/>
<dbReference type="KEGG" id="mmi:MMAR_4663"/>
<dbReference type="eggNOG" id="COG2896">
    <property type="taxonomic scope" value="Bacteria"/>
</dbReference>
<dbReference type="HOGENOM" id="CLU_009273_0_1_11"/>
<dbReference type="OrthoDB" id="9763993at2"/>
<dbReference type="UniPathway" id="UPA00344"/>
<dbReference type="Proteomes" id="UP000001190">
    <property type="component" value="Chromosome"/>
</dbReference>
<dbReference type="GO" id="GO:0051539">
    <property type="term" value="F:4 iron, 4 sulfur cluster binding"/>
    <property type="evidence" value="ECO:0007669"/>
    <property type="project" value="UniProtKB-UniRule"/>
</dbReference>
<dbReference type="GO" id="GO:0061799">
    <property type="term" value="F:cyclic pyranopterin monophosphate synthase activity"/>
    <property type="evidence" value="ECO:0007669"/>
    <property type="project" value="TreeGrafter"/>
</dbReference>
<dbReference type="GO" id="GO:0061798">
    <property type="term" value="F:GTP 3',8'-cyclase activity"/>
    <property type="evidence" value="ECO:0007669"/>
    <property type="project" value="UniProtKB-UniRule"/>
</dbReference>
<dbReference type="GO" id="GO:0005525">
    <property type="term" value="F:GTP binding"/>
    <property type="evidence" value="ECO:0007669"/>
    <property type="project" value="UniProtKB-UniRule"/>
</dbReference>
<dbReference type="GO" id="GO:0046872">
    <property type="term" value="F:metal ion binding"/>
    <property type="evidence" value="ECO:0007669"/>
    <property type="project" value="UniProtKB-KW"/>
</dbReference>
<dbReference type="GO" id="GO:1904047">
    <property type="term" value="F:S-adenosyl-L-methionine binding"/>
    <property type="evidence" value="ECO:0007669"/>
    <property type="project" value="UniProtKB-UniRule"/>
</dbReference>
<dbReference type="GO" id="GO:0006777">
    <property type="term" value="P:Mo-molybdopterin cofactor biosynthetic process"/>
    <property type="evidence" value="ECO:0007669"/>
    <property type="project" value="UniProtKB-UniRule"/>
</dbReference>
<dbReference type="CDD" id="cd01335">
    <property type="entry name" value="Radical_SAM"/>
    <property type="match status" value="1"/>
</dbReference>
<dbReference type="CDD" id="cd21117">
    <property type="entry name" value="Twitch_MoaA"/>
    <property type="match status" value="1"/>
</dbReference>
<dbReference type="Gene3D" id="3.20.20.70">
    <property type="entry name" value="Aldolase class I"/>
    <property type="match status" value="1"/>
</dbReference>
<dbReference type="HAMAP" id="MF_01225_B">
    <property type="entry name" value="MoaA_B"/>
    <property type="match status" value="1"/>
</dbReference>
<dbReference type="InterPro" id="IPR013785">
    <property type="entry name" value="Aldolase_TIM"/>
</dbReference>
<dbReference type="InterPro" id="IPR006638">
    <property type="entry name" value="Elp3/MiaA/NifB-like_rSAM"/>
</dbReference>
<dbReference type="InterPro" id="IPR013483">
    <property type="entry name" value="MoaA"/>
</dbReference>
<dbReference type="InterPro" id="IPR000385">
    <property type="entry name" value="MoaA_NifB_PqqE_Fe-S-bd_CS"/>
</dbReference>
<dbReference type="InterPro" id="IPR010505">
    <property type="entry name" value="MoaA_twitch"/>
</dbReference>
<dbReference type="InterPro" id="IPR050105">
    <property type="entry name" value="MoCo_biosynth_MoaA/MoaC"/>
</dbReference>
<dbReference type="InterPro" id="IPR007197">
    <property type="entry name" value="rSAM"/>
</dbReference>
<dbReference type="NCBIfam" id="TIGR02666">
    <property type="entry name" value="moaA"/>
    <property type="match status" value="1"/>
</dbReference>
<dbReference type="PANTHER" id="PTHR22960:SF0">
    <property type="entry name" value="MOLYBDENUM COFACTOR BIOSYNTHESIS PROTEIN 1"/>
    <property type="match status" value="1"/>
</dbReference>
<dbReference type="PANTHER" id="PTHR22960">
    <property type="entry name" value="MOLYBDOPTERIN COFACTOR SYNTHESIS PROTEIN A"/>
    <property type="match status" value="1"/>
</dbReference>
<dbReference type="Pfam" id="PF06463">
    <property type="entry name" value="Mob_synth_C"/>
    <property type="match status" value="1"/>
</dbReference>
<dbReference type="Pfam" id="PF04055">
    <property type="entry name" value="Radical_SAM"/>
    <property type="match status" value="1"/>
</dbReference>
<dbReference type="SFLD" id="SFLDG01383">
    <property type="entry name" value="cyclic_pyranopterin_phosphate"/>
    <property type="match status" value="1"/>
</dbReference>
<dbReference type="SFLD" id="SFLDG01067">
    <property type="entry name" value="SPASM/twitch_domain_containing"/>
    <property type="match status" value="1"/>
</dbReference>
<dbReference type="SMART" id="SM00729">
    <property type="entry name" value="Elp3"/>
    <property type="match status" value="1"/>
</dbReference>
<dbReference type="SUPFAM" id="SSF102114">
    <property type="entry name" value="Radical SAM enzymes"/>
    <property type="match status" value="1"/>
</dbReference>
<dbReference type="PROSITE" id="PS01305">
    <property type="entry name" value="MOAA_NIFB_PQQE"/>
    <property type="match status" value="1"/>
</dbReference>
<dbReference type="PROSITE" id="PS51918">
    <property type="entry name" value="RADICAL_SAM"/>
    <property type="match status" value="1"/>
</dbReference>
<keyword id="KW-0004">4Fe-4S</keyword>
<keyword id="KW-0342">GTP-binding</keyword>
<keyword id="KW-0408">Iron</keyword>
<keyword id="KW-0411">Iron-sulfur</keyword>
<keyword id="KW-0456">Lyase</keyword>
<keyword id="KW-0479">Metal-binding</keyword>
<keyword id="KW-0501">Molybdenum cofactor biosynthesis</keyword>
<keyword id="KW-0547">Nucleotide-binding</keyword>
<keyword id="KW-1185">Reference proteome</keyword>
<keyword id="KW-0949">S-adenosyl-L-methionine</keyword>
<organism>
    <name type="scientific">Mycobacterium marinum (strain ATCC BAA-535 / M)</name>
    <dbReference type="NCBI Taxonomy" id="216594"/>
    <lineage>
        <taxon>Bacteria</taxon>
        <taxon>Bacillati</taxon>
        <taxon>Actinomycetota</taxon>
        <taxon>Actinomycetes</taxon>
        <taxon>Mycobacteriales</taxon>
        <taxon>Mycobacteriaceae</taxon>
        <taxon>Mycobacterium</taxon>
        <taxon>Mycobacterium ulcerans group</taxon>
    </lineage>
</organism>
<feature type="chain" id="PRO_1000139333" description="GTP 3',8-cyclase">
    <location>
        <begin position="1"/>
        <end position="360"/>
    </location>
</feature>
<feature type="domain" description="Radical SAM core" evidence="2">
    <location>
        <begin position="33"/>
        <end position="251"/>
    </location>
</feature>
<feature type="binding site" evidence="1">
    <location>
        <position position="42"/>
    </location>
    <ligand>
        <name>GTP</name>
        <dbReference type="ChEBI" id="CHEBI:37565"/>
    </ligand>
</feature>
<feature type="binding site" evidence="1">
    <location>
        <position position="49"/>
    </location>
    <ligand>
        <name>[4Fe-4S] cluster</name>
        <dbReference type="ChEBI" id="CHEBI:49883"/>
        <label>1</label>
        <note>4Fe-4S-S-AdoMet</note>
    </ligand>
</feature>
<feature type="binding site" evidence="1">
    <location>
        <position position="53"/>
    </location>
    <ligand>
        <name>[4Fe-4S] cluster</name>
        <dbReference type="ChEBI" id="CHEBI:49883"/>
        <label>1</label>
        <note>4Fe-4S-S-AdoMet</note>
    </ligand>
</feature>
<feature type="binding site" evidence="1">
    <location>
        <position position="55"/>
    </location>
    <ligand>
        <name>S-adenosyl-L-methionine</name>
        <dbReference type="ChEBI" id="CHEBI:59789"/>
    </ligand>
</feature>
<feature type="binding site" evidence="1">
    <location>
        <position position="56"/>
    </location>
    <ligand>
        <name>[4Fe-4S] cluster</name>
        <dbReference type="ChEBI" id="CHEBI:49883"/>
        <label>1</label>
        <note>4Fe-4S-S-AdoMet</note>
    </ligand>
</feature>
<feature type="binding site" evidence="1">
    <location>
        <position position="93"/>
    </location>
    <ligand>
        <name>GTP</name>
        <dbReference type="ChEBI" id="CHEBI:37565"/>
    </ligand>
</feature>
<feature type="binding site" evidence="1">
    <location>
        <position position="97"/>
    </location>
    <ligand>
        <name>S-adenosyl-L-methionine</name>
        <dbReference type="ChEBI" id="CHEBI:59789"/>
    </ligand>
</feature>
<feature type="binding site" evidence="1">
    <location>
        <position position="124"/>
    </location>
    <ligand>
        <name>GTP</name>
        <dbReference type="ChEBI" id="CHEBI:37565"/>
    </ligand>
</feature>
<feature type="binding site" evidence="1">
    <location>
        <position position="148"/>
    </location>
    <ligand>
        <name>S-adenosyl-L-methionine</name>
        <dbReference type="ChEBI" id="CHEBI:59789"/>
    </ligand>
</feature>
<feature type="binding site" evidence="1">
    <location>
        <position position="185"/>
    </location>
    <ligand>
        <name>GTP</name>
        <dbReference type="ChEBI" id="CHEBI:37565"/>
    </ligand>
</feature>
<feature type="binding site" evidence="1">
    <location>
        <position position="219"/>
    </location>
    <ligand>
        <name>S-adenosyl-L-methionine</name>
        <dbReference type="ChEBI" id="CHEBI:59789"/>
    </ligand>
</feature>
<feature type="binding site" evidence="1">
    <location>
        <position position="287"/>
    </location>
    <ligand>
        <name>[4Fe-4S] cluster</name>
        <dbReference type="ChEBI" id="CHEBI:49883"/>
        <label>2</label>
        <note>4Fe-4S-substrate</note>
    </ligand>
</feature>
<feature type="binding site" evidence="1">
    <location>
        <position position="290"/>
    </location>
    <ligand>
        <name>[4Fe-4S] cluster</name>
        <dbReference type="ChEBI" id="CHEBI:49883"/>
        <label>2</label>
        <note>4Fe-4S-substrate</note>
    </ligand>
</feature>
<feature type="binding site" evidence="1">
    <location>
        <begin position="292"/>
        <end position="294"/>
    </location>
    <ligand>
        <name>GTP</name>
        <dbReference type="ChEBI" id="CHEBI:37565"/>
    </ligand>
</feature>
<feature type="binding site" evidence="1">
    <location>
        <position position="304"/>
    </location>
    <ligand>
        <name>[4Fe-4S] cluster</name>
        <dbReference type="ChEBI" id="CHEBI:49883"/>
        <label>2</label>
        <note>4Fe-4S-substrate</note>
    </ligand>
</feature>
<name>MOAA_MYCMM</name>
<evidence type="ECO:0000255" key="1">
    <source>
        <dbReference type="HAMAP-Rule" id="MF_01225"/>
    </source>
</evidence>
<evidence type="ECO:0000255" key="2">
    <source>
        <dbReference type="PROSITE-ProRule" id="PRU01266"/>
    </source>
</evidence>
<reference key="1">
    <citation type="journal article" date="2008" name="Genome Res.">
        <title>Insights from the complete genome sequence of Mycobacterium marinum on the evolution of Mycobacterium tuberculosis.</title>
        <authorList>
            <person name="Stinear T.P."/>
            <person name="Seemann T."/>
            <person name="Harrison P.F."/>
            <person name="Jenkin G.A."/>
            <person name="Davies J.K."/>
            <person name="Johnson P.D."/>
            <person name="Abdellah Z."/>
            <person name="Arrowsmith C."/>
            <person name="Chillingworth T."/>
            <person name="Churcher C."/>
            <person name="Clarke K."/>
            <person name="Cronin A."/>
            <person name="Davis P."/>
            <person name="Goodhead I."/>
            <person name="Holroyd N."/>
            <person name="Jagels K."/>
            <person name="Lord A."/>
            <person name="Moule S."/>
            <person name="Mungall K."/>
            <person name="Norbertczak H."/>
            <person name="Quail M.A."/>
            <person name="Rabbinowitsch E."/>
            <person name="Walker D."/>
            <person name="White B."/>
            <person name="Whitehead S."/>
            <person name="Small P.L."/>
            <person name="Brosch R."/>
            <person name="Ramakrishnan L."/>
            <person name="Fischbach M.A."/>
            <person name="Parkhill J."/>
            <person name="Cole S.T."/>
        </authorList>
    </citation>
    <scope>NUCLEOTIDE SEQUENCE [LARGE SCALE GENOMIC DNA]</scope>
    <source>
        <strain>ATCC BAA-535 / M</strain>
    </source>
</reference>